<evidence type="ECO:0000255" key="1">
    <source>
        <dbReference type="HAMAP-Rule" id="MF_01315"/>
    </source>
</evidence>
<evidence type="ECO:0000256" key="2">
    <source>
        <dbReference type="SAM" id="MobiDB-lite"/>
    </source>
</evidence>
<evidence type="ECO:0000305" key="3"/>
<dbReference type="EMBL" id="CP001601">
    <property type="protein sequence ID" value="ACP32039.1"/>
    <property type="molecule type" value="Genomic_DNA"/>
</dbReference>
<dbReference type="RefSeq" id="WP_010189542.1">
    <property type="nucleotide sequence ID" value="NZ_ACLH01000063.1"/>
</dbReference>
<dbReference type="SMR" id="C3PL35"/>
<dbReference type="STRING" id="548476.cauri_0442"/>
<dbReference type="GeneID" id="31923058"/>
<dbReference type="KEGG" id="car:cauri_0442"/>
<dbReference type="eggNOG" id="COG0099">
    <property type="taxonomic scope" value="Bacteria"/>
</dbReference>
<dbReference type="HOGENOM" id="CLU_103849_1_2_11"/>
<dbReference type="OrthoDB" id="9803610at2"/>
<dbReference type="Proteomes" id="UP000002077">
    <property type="component" value="Chromosome"/>
</dbReference>
<dbReference type="GO" id="GO:0005829">
    <property type="term" value="C:cytosol"/>
    <property type="evidence" value="ECO:0007669"/>
    <property type="project" value="TreeGrafter"/>
</dbReference>
<dbReference type="GO" id="GO:0015935">
    <property type="term" value="C:small ribosomal subunit"/>
    <property type="evidence" value="ECO:0007669"/>
    <property type="project" value="TreeGrafter"/>
</dbReference>
<dbReference type="GO" id="GO:0019843">
    <property type="term" value="F:rRNA binding"/>
    <property type="evidence" value="ECO:0007669"/>
    <property type="project" value="UniProtKB-UniRule"/>
</dbReference>
<dbReference type="GO" id="GO:0003735">
    <property type="term" value="F:structural constituent of ribosome"/>
    <property type="evidence" value="ECO:0007669"/>
    <property type="project" value="InterPro"/>
</dbReference>
<dbReference type="GO" id="GO:0000049">
    <property type="term" value="F:tRNA binding"/>
    <property type="evidence" value="ECO:0007669"/>
    <property type="project" value="UniProtKB-UniRule"/>
</dbReference>
<dbReference type="GO" id="GO:0006412">
    <property type="term" value="P:translation"/>
    <property type="evidence" value="ECO:0007669"/>
    <property type="project" value="UniProtKB-UniRule"/>
</dbReference>
<dbReference type="FunFam" id="1.10.8.50:FF:000001">
    <property type="entry name" value="30S ribosomal protein S13"/>
    <property type="match status" value="1"/>
</dbReference>
<dbReference type="FunFam" id="4.10.910.10:FF:000001">
    <property type="entry name" value="30S ribosomal protein S13"/>
    <property type="match status" value="1"/>
</dbReference>
<dbReference type="Gene3D" id="1.10.8.50">
    <property type="match status" value="1"/>
</dbReference>
<dbReference type="Gene3D" id="4.10.910.10">
    <property type="entry name" value="30s ribosomal protein s13, domain 2"/>
    <property type="match status" value="1"/>
</dbReference>
<dbReference type="HAMAP" id="MF_01315">
    <property type="entry name" value="Ribosomal_uS13"/>
    <property type="match status" value="1"/>
</dbReference>
<dbReference type="InterPro" id="IPR027437">
    <property type="entry name" value="Rbsml_uS13_C"/>
</dbReference>
<dbReference type="InterPro" id="IPR001892">
    <property type="entry name" value="Ribosomal_uS13"/>
</dbReference>
<dbReference type="InterPro" id="IPR010979">
    <property type="entry name" value="Ribosomal_uS13-like_H2TH"/>
</dbReference>
<dbReference type="InterPro" id="IPR019980">
    <property type="entry name" value="Ribosomal_uS13_bac-type"/>
</dbReference>
<dbReference type="InterPro" id="IPR018269">
    <property type="entry name" value="Ribosomal_uS13_CS"/>
</dbReference>
<dbReference type="NCBIfam" id="TIGR03631">
    <property type="entry name" value="uS13_bact"/>
    <property type="match status" value="1"/>
</dbReference>
<dbReference type="PANTHER" id="PTHR10871">
    <property type="entry name" value="30S RIBOSOMAL PROTEIN S13/40S RIBOSOMAL PROTEIN S18"/>
    <property type="match status" value="1"/>
</dbReference>
<dbReference type="PANTHER" id="PTHR10871:SF1">
    <property type="entry name" value="SMALL RIBOSOMAL SUBUNIT PROTEIN US13M"/>
    <property type="match status" value="1"/>
</dbReference>
<dbReference type="Pfam" id="PF00416">
    <property type="entry name" value="Ribosomal_S13"/>
    <property type="match status" value="1"/>
</dbReference>
<dbReference type="PIRSF" id="PIRSF002134">
    <property type="entry name" value="Ribosomal_S13"/>
    <property type="match status" value="1"/>
</dbReference>
<dbReference type="SUPFAM" id="SSF46946">
    <property type="entry name" value="S13-like H2TH domain"/>
    <property type="match status" value="1"/>
</dbReference>
<dbReference type="PROSITE" id="PS00646">
    <property type="entry name" value="RIBOSOMAL_S13_1"/>
    <property type="match status" value="1"/>
</dbReference>
<dbReference type="PROSITE" id="PS50159">
    <property type="entry name" value="RIBOSOMAL_S13_2"/>
    <property type="match status" value="1"/>
</dbReference>
<protein>
    <recommendedName>
        <fullName evidence="1">Small ribosomal subunit protein uS13</fullName>
    </recommendedName>
    <alternativeName>
        <fullName evidence="3">30S ribosomal protein S13</fullName>
    </alternativeName>
</protein>
<keyword id="KW-1185">Reference proteome</keyword>
<keyword id="KW-0687">Ribonucleoprotein</keyword>
<keyword id="KW-0689">Ribosomal protein</keyword>
<keyword id="KW-0694">RNA-binding</keyword>
<keyword id="KW-0699">rRNA-binding</keyword>
<keyword id="KW-0820">tRNA-binding</keyword>
<organism>
    <name type="scientific">Corynebacterium aurimucosum (strain ATCC 700975 / DSM 44827 / CIP 107346 / CN-1)</name>
    <name type="common">Corynebacterium nigricans</name>
    <dbReference type="NCBI Taxonomy" id="548476"/>
    <lineage>
        <taxon>Bacteria</taxon>
        <taxon>Bacillati</taxon>
        <taxon>Actinomycetota</taxon>
        <taxon>Actinomycetes</taxon>
        <taxon>Mycobacteriales</taxon>
        <taxon>Corynebacteriaceae</taxon>
        <taxon>Corynebacterium</taxon>
    </lineage>
</organism>
<feature type="chain" id="PRO_1000165615" description="Small ribosomal subunit protein uS13">
    <location>
        <begin position="1"/>
        <end position="122"/>
    </location>
</feature>
<feature type="region of interest" description="Disordered" evidence="2">
    <location>
        <begin position="95"/>
        <end position="122"/>
    </location>
</feature>
<proteinExistence type="inferred from homology"/>
<gene>
    <name evidence="1" type="primary">rpsM</name>
    <name type="ordered locus">cauri_0442</name>
</gene>
<name>RS13_CORA7</name>
<accession>C3PL35</accession>
<sequence length="122" mass="13848">MARLAGVDLPRNKRMEVALTYIYGIGPARAKELLEKTGISPDLRTDNLDDDQLSALRDVIEATWKVEGDLRRQVQADIRRKIEIGCYQGIRHRRGLPVRGQRTKTNARTRKGPKKTIAGKKK</sequence>
<comment type="function">
    <text evidence="1">Located at the top of the head of the 30S subunit, it contacts several helices of the 16S rRNA. In the 70S ribosome it contacts the 23S rRNA (bridge B1a) and protein L5 of the 50S subunit (bridge B1b), connecting the 2 subunits; these bridges are implicated in subunit movement. Contacts the tRNAs in the A and P-sites.</text>
</comment>
<comment type="subunit">
    <text evidence="1">Part of the 30S ribosomal subunit. Forms a loose heterodimer with protein S19. Forms two bridges to the 50S subunit in the 70S ribosome.</text>
</comment>
<comment type="similarity">
    <text evidence="1">Belongs to the universal ribosomal protein uS13 family.</text>
</comment>
<reference key="1">
    <citation type="journal article" date="2010" name="BMC Genomics">
        <title>Complete genome sequence and lifestyle of black-pigmented Corynebacterium aurimucosum ATCC 700975 (formerly C. nigricans CN-1) isolated from a vaginal swab of a woman with spontaneous abortion.</title>
        <authorList>
            <person name="Trost E."/>
            <person name="Gotker S."/>
            <person name="Schneider J."/>
            <person name="Schneiker-Bekel S."/>
            <person name="Szczepanowski R."/>
            <person name="Tilker A."/>
            <person name="Viehoever P."/>
            <person name="Arnold W."/>
            <person name="Bekel T."/>
            <person name="Blom J."/>
            <person name="Gartemann K.H."/>
            <person name="Linke B."/>
            <person name="Goesmann A."/>
            <person name="Puhler A."/>
            <person name="Shukla S.K."/>
            <person name="Tauch A."/>
        </authorList>
    </citation>
    <scope>NUCLEOTIDE SEQUENCE [LARGE SCALE GENOMIC DNA]</scope>
    <source>
        <strain>ATCC 700975 / DSM 44827 / CIP 107346 / CN-1</strain>
    </source>
</reference>